<gene>
    <name evidence="1" type="primary">efp</name>
    <name type="ordered locus">SaurJH9_1587</name>
</gene>
<proteinExistence type="inferred from homology"/>
<evidence type="ECO:0000255" key="1">
    <source>
        <dbReference type="HAMAP-Rule" id="MF_00141"/>
    </source>
</evidence>
<name>EFP_STAA9</name>
<feature type="chain" id="PRO_1000076537" description="Elongation factor P">
    <location>
        <begin position="1"/>
        <end position="185"/>
    </location>
</feature>
<organism>
    <name type="scientific">Staphylococcus aureus (strain JH9)</name>
    <dbReference type="NCBI Taxonomy" id="359786"/>
    <lineage>
        <taxon>Bacteria</taxon>
        <taxon>Bacillati</taxon>
        <taxon>Bacillota</taxon>
        <taxon>Bacilli</taxon>
        <taxon>Bacillales</taxon>
        <taxon>Staphylococcaceae</taxon>
        <taxon>Staphylococcus</taxon>
    </lineage>
</organism>
<accession>A5IT57</accession>
<reference key="1">
    <citation type="submission" date="2007-05" db="EMBL/GenBank/DDBJ databases">
        <title>Complete sequence of chromosome of Staphylococcus aureus subsp. aureus JH9.</title>
        <authorList>
            <consortium name="US DOE Joint Genome Institute"/>
            <person name="Copeland A."/>
            <person name="Lucas S."/>
            <person name="Lapidus A."/>
            <person name="Barry K."/>
            <person name="Detter J.C."/>
            <person name="Glavina del Rio T."/>
            <person name="Hammon N."/>
            <person name="Israni S."/>
            <person name="Pitluck S."/>
            <person name="Chain P."/>
            <person name="Malfatti S."/>
            <person name="Shin M."/>
            <person name="Vergez L."/>
            <person name="Schmutz J."/>
            <person name="Larimer F."/>
            <person name="Land M."/>
            <person name="Hauser L."/>
            <person name="Kyrpides N."/>
            <person name="Kim E."/>
            <person name="Tomasz A."/>
            <person name="Richardson P."/>
        </authorList>
    </citation>
    <scope>NUCLEOTIDE SEQUENCE [LARGE SCALE GENOMIC DNA]</scope>
    <source>
        <strain>JH9</strain>
    </source>
</reference>
<protein>
    <recommendedName>
        <fullName evidence="1">Elongation factor P</fullName>
        <shortName evidence="1">EF-P</shortName>
    </recommendedName>
</protein>
<sequence>MISVNDFKTGLTISVDNAIWKVIDFQHVKPGKGSAFVRSKLRNLRTGAIQEKTFRAGEKVEPAMIENRRMQYLYADGDNHVFMDNESFEQTELSSDYLKEELNYLKEGMEVQIQTYEGETIGVELPKTVELTVTETEPGIKGDTATGATKSATVETGYTLNVPLFVNEGDVLIINTGDGSYISRG</sequence>
<dbReference type="EMBL" id="CP000703">
    <property type="protein sequence ID" value="ABQ49380.1"/>
    <property type="molecule type" value="Genomic_DNA"/>
</dbReference>
<dbReference type="RefSeq" id="WP_000626504.1">
    <property type="nucleotide sequence ID" value="NC_009487.1"/>
</dbReference>
<dbReference type="SMR" id="A5IT57"/>
<dbReference type="KEGG" id="saj:SaurJH9_1587"/>
<dbReference type="HOGENOM" id="CLU_074944_0_1_9"/>
<dbReference type="UniPathway" id="UPA00345"/>
<dbReference type="GO" id="GO:0005737">
    <property type="term" value="C:cytoplasm"/>
    <property type="evidence" value="ECO:0007669"/>
    <property type="project" value="UniProtKB-SubCell"/>
</dbReference>
<dbReference type="GO" id="GO:0003746">
    <property type="term" value="F:translation elongation factor activity"/>
    <property type="evidence" value="ECO:0007669"/>
    <property type="project" value="UniProtKB-UniRule"/>
</dbReference>
<dbReference type="GO" id="GO:0043043">
    <property type="term" value="P:peptide biosynthetic process"/>
    <property type="evidence" value="ECO:0007669"/>
    <property type="project" value="InterPro"/>
</dbReference>
<dbReference type="CDD" id="cd04470">
    <property type="entry name" value="S1_EF-P_repeat_1"/>
    <property type="match status" value="1"/>
</dbReference>
<dbReference type="CDD" id="cd05794">
    <property type="entry name" value="S1_EF-P_repeat_2"/>
    <property type="match status" value="1"/>
</dbReference>
<dbReference type="FunFam" id="2.30.30.30:FF:000010">
    <property type="entry name" value="Elongation factor P"/>
    <property type="match status" value="1"/>
</dbReference>
<dbReference type="FunFam" id="2.40.50.140:FF:000004">
    <property type="entry name" value="Elongation factor P"/>
    <property type="match status" value="1"/>
</dbReference>
<dbReference type="FunFam" id="2.40.50.140:FF:000009">
    <property type="entry name" value="Elongation factor P"/>
    <property type="match status" value="1"/>
</dbReference>
<dbReference type="Gene3D" id="2.30.30.30">
    <property type="match status" value="1"/>
</dbReference>
<dbReference type="Gene3D" id="2.40.50.140">
    <property type="entry name" value="Nucleic acid-binding proteins"/>
    <property type="match status" value="2"/>
</dbReference>
<dbReference type="HAMAP" id="MF_00141">
    <property type="entry name" value="EF_P"/>
    <property type="match status" value="1"/>
</dbReference>
<dbReference type="InterPro" id="IPR015365">
    <property type="entry name" value="Elong-fact-P_C"/>
</dbReference>
<dbReference type="InterPro" id="IPR012340">
    <property type="entry name" value="NA-bd_OB-fold"/>
</dbReference>
<dbReference type="InterPro" id="IPR014722">
    <property type="entry name" value="Rib_uL2_dom2"/>
</dbReference>
<dbReference type="InterPro" id="IPR020599">
    <property type="entry name" value="Transl_elong_fac_P/YeiP"/>
</dbReference>
<dbReference type="InterPro" id="IPR013185">
    <property type="entry name" value="Transl_elong_KOW-like"/>
</dbReference>
<dbReference type="InterPro" id="IPR001059">
    <property type="entry name" value="Transl_elong_P/YeiP_cen"/>
</dbReference>
<dbReference type="InterPro" id="IPR013852">
    <property type="entry name" value="Transl_elong_P/YeiP_CS"/>
</dbReference>
<dbReference type="InterPro" id="IPR011768">
    <property type="entry name" value="Transl_elongation_fac_P"/>
</dbReference>
<dbReference type="InterPro" id="IPR008991">
    <property type="entry name" value="Translation_prot_SH3-like_sf"/>
</dbReference>
<dbReference type="NCBIfam" id="TIGR00038">
    <property type="entry name" value="efp"/>
    <property type="match status" value="1"/>
</dbReference>
<dbReference type="NCBIfam" id="NF001810">
    <property type="entry name" value="PRK00529.1"/>
    <property type="match status" value="1"/>
</dbReference>
<dbReference type="PANTHER" id="PTHR30053">
    <property type="entry name" value="ELONGATION FACTOR P"/>
    <property type="match status" value="1"/>
</dbReference>
<dbReference type="PANTHER" id="PTHR30053:SF12">
    <property type="entry name" value="ELONGATION FACTOR P (EF-P) FAMILY PROTEIN"/>
    <property type="match status" value="1"/>
</dbReference>
<dbReference type="Pfam" id="PF01132">
    <property type="entry name" value="EFP"/>
    <property type="match status" value="1"/>
</dbReference>
<dbReference type="Pfam" id="PF08207">
    <property type="entry name" value="EFP_N"/>
    <property type="match status" value="1"/>
</dbReference>
<dbReference type="Pfam" id="PF09285">
    <property type="entry name" value="Elong-fact-P_C"/>
    <property type="match status" value="1"/>
</dbReference>
<dbReference type="PIRSF" id="PIRSF005901">
    <property type="entry name" value="EF-P"/>
    <property type="match status" value="1"/>
</dbReference>
<dbReference type="SMART" id="SM01185">
    <property type="entry name" value="EFP"/>
    <property type="match status" value="1"/>
</dbReference>
<dbReference type="SMART" id="SM00841">
    <property type="entry name" value="Elong-fact-P_C"/>
    <property type="match status" value="1"/>
</dbReference>
<dbReference type="SUPFAM" id="SSF50249">
    <property type="entry name" value="Nucleic acid-binding proteins"/>
    <property type="match status" value="2"/>
</dbReference>
<dbReference type="SUPFAM" id="SSF50104">
    <property type="entry name" value="Translation proteins SH3-like domain"/>
    <property type="match status" value="1"/>
</dbReference>
<dbReference type="PROSITE" id="PS01275">
    <property type="entry name" value="EFP"/>
    <property type="match status" value="1"/>
</dbReference>
<keyword id="KW-0963">Cytoplasm</keyword>
<keyword id="KW-0251">Elongation factor</keyword>
<keyword id="KW-0648">Protein biosynthesis</keyword>
<comment type="function">
    <text evidence="1">Involved in peptide bond synthesis. Stimulates efficient translation and peptide-bond synthesis on native or reconstituted 70S ribosomes in vitro. Probably functions indirectly by altering the affinity of the ribosome for aminoacyl-tRNA, thus increasing their reactivity as acceptors for peptidyl transferase.</text>
</comment>
<comment type="pathway">
    <text evidence="1">Protein biosynthesis; polypeptide chain elongation.</text>
</comment>
<comment type="subcellular location">
    <subcellularLocation>
        <location evidence="1">Cytoplasm</location>
    </subcellularLocation>
</comment>
<comment type="similarity">
    <text evidence="1">Belongs to the elongation factor P family.</text>
</comment>